<sequence>MKTQIEQAREGIITPQMAAVAAEEHVSPEYVCRMVAEGKVVIPWNHVRAPKAVGIGKGLRTKVNASIGTSSDIVDYEAEVRKARAAQESGADTLMELSVGGDLDRVRREVIAAVDLPVGNVPLYQAFCEAARKYGDPNRLDPEMLFDLIERQCADGMAFMAVHCGINLYTIERLRRQGYRYGGLVSKGGVSMVGWMMANGRENPLYEQFDRVVGILKKYDTVLSLGNGLRAGAIHDSSDRAQIQELLINCELAEMGREMGCQMLVEGPGHVPLDEVEGNIQLQKRMSGGAPYYMLGPISTDVAPGFDHITAAIGAAQSSRFGADLICYITPAEHLALPNEEDVRQGVKAARVAAYIGDMNKYPEKGRERDREMSKARRDLDWQRQFELALYPEDARAIRASRTPEDEATCTMCGDFCASRGAGRLFAGDLRGDKV</sequence>
<name>BZAF_GEOSL</name>
<dbReference type="EC" id="4.1.99.23" evidence="2"/>
<dbReference type="EMBL" id="AE017180">
    <property type="protein sequence ID" value="AAR36397.1"/>
    <property type="molecule type" value="Genomic_DNA"/>
</dbReference>
<dbReference type="RefSeq" id="NP_954047.1">
    <property type="nucleotide sequence ID" value="NC_002939.5"/>
</dbReference>
<dbReference type="SMR" id="P61425"/>
<dbReference type="FunCoup" id="P61425">
    <property type="interactions" value="478"/>
</dbReference>
<dbReference type="STRING" id="243231.GSU3005"/>
<dbReference type="EnsemblBacteria" id="AAR36397">
    <property type="protein sequence ID" value="AAR36397"/>
    <property type="gene ID" value="GSU3005"/>
</dbReference>
<dbReference type="KEGG" id="gsu:GSU3005"/>
<dbReference type="PATRIC" id="fig|243231.5.peg.3032"/>
<dbReference type="eggNOG" id="COG0422">
    <property type="taxonomic scope" value="Bacteria"/>
</dbReference>
<dbReference type="HOGENOM" id="CLU_013181_2_2_7"/>
<dbReference type="InParanoid" id="P61425"/>
<dbReference type="OrthoDB" id="9805897at2"/>
<dbReference type="BioCyc" id="MetaCyc:MONOMER-20980"/>
<dbReference type="Proteomes" id="UP000000577">
    <property type="component" value="Chromosome"/>
</dbReference>
<dbReference type="GO" id="GO:0005829">
    <property type="term" value="C:cytosol"/>
    <property type="evidence" value="ECO:0000318"/>
    <property type="project" value="GO_Central"/>
</dbReference>
<dbReference type="GO" id="GO:0051539">
    <property type="term" value="F:4 iron, 4 sulfur cluster binding"/>
    <property type="evidence" value="ECO:0007669"/>
    <property type="project" value="UniProtKB-KW"/>
</dbReference>
<dbReference type="GO" id="GO:0016829">
    <property type="term" value="F:lyase activity"/>
    <property type="evidence" value="ECO:0007669"/>
    <property type="project" value="UniProtKB-KW"/>
</dbReference>
<dbReference type="GO" id="GO:0046872">
    <property type="term" value="F:metal ion binding"/>
    <property type="evidence" value="ECO:0007669"/>
    <property type="project" value="UniProtKB-KW"/>
</dbReference>
<dbReference type="GO" id="GO:0009236">
    <property type="term" value="P:cobalamin biosynthetic process"/>
    <property type="evidence" value="ECO:0007669"/>
    <property type="project" value="UniProtKB-KW"/>
</dbReference>
<dbReference type="GO" id="GO:0009228">
    <property type="term" value="P:thiamine biosynthetic process"/>
    <property type="evidence" value="ECO:0000318"/>
    <property type="project" value="GO_Central"/>
</dbReference>
<dbReference type="FunFam" id="3.20.20.540:FF:000001">
    <property type="entry name" value="Phosphomethylpyrimidine synthase"/>
    <property type="match status" value="1"/>
</dbReference>
<dbReference type="Gene3D" id="6.10.250.620">
    <property type="match status" value="1"/>
</dbReference>
<dbReference type="Gene3D" id="3.20.20.540">
    <property type="entry name" value="Radical SAM ThiC family, central domain"/>
    <property type="match status" value="1"/>
</dbReference>
<dbReference type="InterPro" id="IPR038521">
    <property type="entry name" value="ThiC/Bza_core_dom"/>
</dbReference>
<dbReference type="InterPro" id="IPR002817">
    <property type="entry name" value="ThiC/BzaA/B"/>
</dbReference>
<dbReference type="NCBIfam" id="NF009895">
    <property type="entry name" value="PRK13352.1"/>
    <property type="match status" value="1"/>
</dbReference>
<dbReference type="NCBIfam" id="TIGR00190">
    <property type="entry name" value="thiC"/>
    <property type="match status" value="1"/>
</dbReference>
<dbReference type="PANTHER" id="PTHR30557:SF1">
    <property type="entry name" value="PHOSPHOMETHYLPYRIMIDINE SYNTHASE, CHLOROPLASTIC"/>
    <property type="match status" value="1"/>
</dbReference>
<dbReference type="PANTHER" id="PTHR30557">
    <property type="entry name" value="THIAMINE BIOSYNTHESIS PROTEIN THIC"/>
    <property type="match status" value="1"/>
</dbReference>
<dbReference type="Pfam" id="PF01964">
    <property type="entry name" value="ThiC_Rad_SAM"/>
    <property type="match status" value="1"/>
</dbReference>
<dbReference type="SFLD" id="SFLDF00407">
    <property type="entry name" value="phosphomethylpyrimidine_syntha"/>
    <property type="match status" value="1"/>
</dbReference>
<dbReference type="SFLD" id="SFLDG01114">
    <property type="entry name" value="phosphomethylpyrimidine_syntha"/>
    <property type="match status" value="1"/>
</dbReference>
<dbReference type="SFLD" id="SFLDS00113">
    <property type="entry name" value="Radical_SAM_Phosphomethylpyrim"/>
    <property type="match status" value="1"/>
</dbReference>
<gene>
    <name evidence="3" type="primary">bzaF</name>
    <name evidence="5" type="synonym">thiC-2</name>
    <name type="ordered locus">GSU3005</name>
</gene>
<reference key="1">
    <citation type="journal article" date="2003" name="Science">
        <title>Genome of Geobacter sulfurreducens: metal reduction in subsurface environments.</title>
        <authorList>
            <person name="Methe B.A."/>
            <person name="Nelson K.E."/>
            <person name="Eisen J.A."/>
            <person name="Paulsen I.T."/>
            <person name="Nelson W.C."/>
            <person name="Heidelberg J.F."/>
            <person name="Wu D."/>
            <person name="Wu M."/>
            <person name="Ward N.L."/>
            <person name="Beanan M.J."/>
            <person name="Dodson R.J."/>
            <person name="Madupu R."/>
            <person name="Brinkac L.M."/>
            <person name="Daugherty S.C."/>
            <person name="DeBoy R.T."/>
            <person name="Durkin A.S."/>
            <person name="Gwinn M.L."/>
            <person name="Kolonay J.F."/>
            <person name="Sullivan S.A."/>
            <person name="Haft D.H."/>
            <person name="Selengut J."/>
            <person name="Davidsen T.M."/>
            <person name="Zafar N."/>
            <person name="White O."/>
            <person name="Tran B."/>
            <person name="Romero C."/>
            <person name="Forberger H.A."/>
            <person name="Weidman J.F."/>
            <person name="Khouri H.M."/>
            <person name="Feldblyum T.V."/>
            <person name="Utterback T.R."/>
            <person name="Van Aken S.E."/>
            <person name="Lovley D.R."/>
            <person name="Fraser C.M."/>
        </authorList>
    </citation>
    <scope>NUCLEOTIDE SEQUENCE [LARGE SCALE GENOMIC DNA]</scope>
    <source>
        <strain>ATCC 51573 / DSM 12127 / PCA</strain>
    </source>
</reference>
<reference key="2">
    <citation type="journal article" date="2015" name="Proc. Natl. Acad. Sci. U.S.A.">
        <title>Anaerobic biosynthesis of the lower ligand of vitamin B12.</title>
        <authorList>
            <person name="Hazra A.B."/>
            <person name="Han A.W."/>
            <person name="Mehta A.P."/>
            <person name="Mok K.C."/>
            <person name="Osadchiy V."/>
            <person name="Begley T.P."/>
            <person name="Taga M.E."/>
        </authorList>
    </citation>
    <scope>FUNCTION</scope>
    <scope>CATALYTIC ACTIVITY</scope>
    <scope>COFACTOR</scope>
    <scope>PATHWAY</scope>
</reference>
<organism>
    <name type="scientific">Geobacter sulfurreducens (strain ATCC 51573 / DSM 12127 / PCA)</name>
    <dbReference type="NCBI Taxonomy" id="243231"/>
    <lineage>
        <taxon>Bacteria</taxon>
        <taxon>Pseudomonadati</taxon>
        <taxon>Thermodesulfobacteriota</taxon>
        <taxon>Desulfuromonadia</taxon>
        <taxon>Geobacterales</taxon>
        <taxon>Geobacteraceae</taxon>
        <taxon>Geobacter</taxon>
    </lineage>
</organism>
<accession>P61425</accession>
<feature type="chain" id="PRO_0000152808" description="5-hydroxybenzimidazole synthase">
    <location>
        <begin position="1"/>
        <end position="435"/>
    </location>
</feature>
<feature type="binding site" evidence="1">
    <location>
        <position position="95"/>
    </location>
    <ligand>
        <name>substrate</name>
    </ligand>
</feature>
<feature type="binding site" evidence="1">
    <location>
        <position position="124"/>
    </location>
    <ligand>
        <name>substrate</name>
    </ligand>
</feature>
<feature type="binding site" evidence="1">
    <location>
        <position position="163"/>
    </location>
    <ligand>
        <name>substrate</name>
    </ligand>
</feature>
<feature type="binding site" evidence="1">
    <location>
        <begin position="186"/>
        <end position="188"/>
    </location>
    <ligand>
        <name>substrate</name>
    </ligand>
</feature>
<feature type="binding site" evidence="1">
    <location>
        <begin position="227"/>
        <end position="230"/>
    </location>
    <ligand>
        <name>substrate</name>
    </ligand>
</feature>
<feature type="binding site" evidence="1">
    <location>
        <position position="266"/>
    </location>
    <ligand>
        <name>substrate</name>
    </ligand>
</feature>
<feature type="binding site" evidence="1">
    <location>
        <position position="270"/>
    </location>
    <ligand>
        <name>Zn(2+)</name>
        <dbReference type="ChEBI" id="CHEBI:29105"/>
    </ligand>
</feature>
<feature type="binding site" evidence="1">
    <location>
        <position position="293"/>
    </location>
    <ligand>
        <name>substrate</name>
    </ligand>
</feature>
<feature type="binding site" evidence="1">
    <location>
        <position position="334"/>
    </location>
    <ligand>
        <name>Zn(2+)</name>
        <dbReference type="ChEBI" id="CHEBI:29105"/>
    </ligand>
</feature>
<feature type="binding site" evidence="1">
    <location>
        <position position="410"/>
    </location>
    <ligand>
        <name>[4Fe-4S] cluster</name>
        <dbReference type="ChEBI" id="CHEBI:49883"/>
        <note>4Fe-4S-S-AdoMet</note>
    </ligand>
</feature>
<feature type="binding site" evidence="1">
    <location>
        <position position="413"/>
    </location>
    <ligand>
        <name>[4Fe-4S] cluster</name>
        <dbReference type="ChEBI" id="CHEBI:49883"/>
        <note>4Fe-4S-S-AdoMet</note>
    </ligand>
</feature>
<feature type="binding site" evidence="1">
    <location>
        <position position="417"/>
    </location>
    <ligand>
        <name>[4Fe-4S] cluster</name>
        <dbReference type="ChEBI" id="CHEBI:49883"/>
        <note>4Fe-4S-S-AdoMet</note>
    </ligand>
</feature>
<evidence type="ECO:0000250" key="1">
    <source>
        <dbReference type="UniProtKB" id="Q9A6Q5"/>
    </source>
</evidence>
<evidence type="ECO:0000269" key="2">
    <source>
    </source>
</evidence>
<evidence type="ECO:0000303" key="3">
    <source>
    </source>
</evidence>
<evidence type="ECO:0000305" key="4"/>
<evidence type="ECO:0000312" key="5">
    <source>
        <dbReference type="EMBL" id="AAR36397.1"/>
    </source>
</evidence>
<proteinExistence type="evidence at protein level"/>
<keyword id="KW-0004">4Fe-4S</keyword>
<keyword id="KW-0169">Cobalamin biosynthesis</keyword>
<keyword id="KW-0408">Iron</keyword>
<keyword id="KW-0411">Iron-sulfur</keyword>
<keyword id="KW-0456">Lyase</keyword>
<keyword id="KW-0479">Metal-binding</keyword>
<keyword id="KW-1185">Reference proteome</keyword>
<keyword id="KW-0949">S-adenosyl-L-methionine</keyword>
<keyword id="KW-0862">Zinc</keyword>
<comment type="function">
    <text evidence="2">Catalyzes the conversion of aminoimidazole ribotide (AIR) to 5-hydroxybenzimidazole (5-HBI) in a radical S-adenosyl-L-methionine (SAM)-dependent reaction. Is thus involved in the anaerobic biosynthesis of the benzimidazole lower axial ligand of the cobamide produced by G.sulfurreducens.</text>
</comment>
<comment type="catalytic activity">
    <reaction evidence="2">
        <text>5-amino-1-(5-phospho-beta-D-ribosyl)imidazole + AH2 + S-adenosyl-L-methionine = 5-hydroxybenzimidazole + 5'-deoxyadenosine + formate + L-methionine + A + NH4(+) + phosphate + 2 H(+)</text>
        <dbReference type="Rhea" id="RHEA:53504"/>
        <dbReference type="ChEBI" id="CHEBI:13193"/>
        <dbReference type="ChEBI" id="CHEBI:15378"/>
        <dbReference type="ChEBI" id="CHEBI:15740"/>
        <dbReference type="ChEBI" id="CHEBI:17319"/>
        <dbReference type="ChEBI" id="CHEBI:17499"/>
        <dbReference type="ChEBI" id="CHEBI:28938"/>
        <dbReference type="ChEBI" id="CHEBI:43474"/>
        <dbReference type="ChEBI" id="CHEBI:57844"/>
        <dbReference type="ChEBI" id="CHEBI:59789"/>
        <dbReference type="ChEBI" id="CHEBI:137404"/>
        <dbReference type="ChEBI" id="CHEBI:137981"/>
        <dbReference type="EC" id="4.1.99.23"/>
    </reaction>
</comment>
<comment type="cofactor">
    <cofactor evidence="2">
        <name>[4Fe-4S] cluster</name>
        <dbReference type="ChEBI" id="CHEBI:49883"/>
    </cofactor>
    <text evidence="1">Binds 1 [4Fe-4S] cluster per subunit. The cluster is coordinated with 3 cysteines and an exchangeable S-adenosyl-L-methionine.</text>
</comment>
<comment type="subunit">
    <text evidence="1">Homodimer.</text>
</comment>
<comment type="similarity">
    <text evidence="4">Belongs to the ThiC family. 5-hydroxybenzimidazole synthase subfamily.</text>
</comment>
<protein>
    <recommendedName>
        <fullName evidence="3">5-hydroxybenzimidazole synthase</fullName>
        <shortName evidence="3">5-OHBza synthase</shortName>
        <shortName>HBI synthase</shortName>
        <ecNumber evidence="2">4.1.99.23</ecNumber>
    </recommendedName>
</protein>